<reference key="1">
    <citation type="journal article" date="2005" name="Nucleic Acids Res.">
        <title>The genome sequence of Xanthomonas oryzae pathovar oryzae KACC10331, the bacterial blight pathogen of rice.</title>
        <authorList>
            <person name="Lee B.-M."/>
            <person name="Park Y.-J."/>
            <person name="Park D.-S."/>
            <person name="Kang H.-W."/>
            <person name="Kim J.-G."/>
            <person name="Song E.-S."/>
            <person name="Park I.-C."/>
            <person name="Yoon U.-H."/>
            <person name="Hahn J.-H."/>
            <person name="Koo B.-S."/>
            <person name="Lee G.-B."/>
            <person name="Kim H."/>
            <person name="Park H.-S."/>
            <person name="Yoon K.-O."/>
            <person name="Kim J.-H."/>
            <person name="Jung C.-H."/>
            <person name="Koh N.-H."/>
            <person name="Seo J.-S."/>
            <person name="Go S.-J."/>
        </authorList>
    </citation>
    <scope>NUCLEOTIDE SEQUENCE [LARGE SCALE GENOMIC DNA]</scope>
    <source>
        <strain>KACC10331 / KXO85</strain>
    </source>
</reference>
<accession>Q5H1E0</accession>
<name>RS2_XANOR</name>
<proteinExistence type="inferred from homology"/>
<sequence>MPQVTMRQMLEAGVHFGHQCRYWHPNMAQYIFGARGKIHIINLEKTVPLFNDAMNYLSSIAQKRGTILFLGTKRSARASIKEEAERCGMPFMTQRWLGGTLTNFRTVKQSVARLKELEAAETDGTFDKLVKHEVLSLRREREKLDASLGGIKEMNRLPDAIFVIDIGHEDIAIKEAKKLGIPVIAVVDTNYNPNLVDYAIPGNDDAIRAVQLYARAAADAVLEGKAAAPNSASVREEEFSAESADEGKGRRAPAKKGEKKADAPAAE</sequence>
<comment type="similarity">
    <text evidence="1">Belongs to the universal ribosomal protein uS2 family.</text>
</comment>
<comment type="sequence caution" evidence="3">
    <conflict type="erroneous initiation">
        <sequence resource="EMBL-CDS" id="AAW75231"/>
    </conflict>
</comment>
<evidence type="ECO:0000255" key="1">
    <source>
        <dbReference type="HAMAP-Rule" id="MF_00291"/>
    </source>
</evidence>
<evidence type="ECO:0000256" key="2">
    <source>
        <dbReference type="SAM" id="MobiDB-lite"/>
    </source>
</evidence>
<evidence type="ECO:0000305" key="3"/>
<keyword id="KW-1185">Reference proteome</keyword>
<keyword id="KW-0687">Ribonucleoprotein</keyword>
<keyword id="KW-0689">Ribosomal protein</keyword>
<gene>
    <name evidence="1" type="primary">rpsB</name>
    <name type="ordered locus">XOO1977</name>
</gene>
<organism>
    <name type="scientific">Xanthomonas oryzae pv. oryzae (strain KACC10331 / KXO85)</name>
    <dbReference type="NCBI Taxonomy" id="291331"/>
    <lineage>
        <taxon>Bacteria</taxon>
        <taxon>Pseudomonadati</taxon>
        <taxon>Pseudomonadota</taxon>
        <taxon>Gammaproteobacteria</taxon>
        <taxon>Lysobacterales</taxon>
        <taxon>Lysobacteraceae</taxon>
        <taxon>Xanthomonas</taxon>
    </lineage>
</organism>
<protein>
    <recommendedName>
        <fullName evidence="1">Small ribosomal subunit protein uS2</fullName>
    </recommendedName>
    <alternativeName>
        <fullName evidence="3">30S ribosomal protein S2</fullName>
    </alternativeName>
</protein>
<dbReference type="EMBL" id="AE013598">
    <property type="protein sequence ID" value="AAW75231.1"/>
    <property type="status" value="ALT_INIT"/>
    <property type="molecule type" value="Genomic_DNA"/>
</dbReference>
<dbReference type="SMR" id="Q5H1E0"/>
<dbReference type="STRING" id="291331.XOO1977"/>
<dbReference type="KEGG" id="xoo:XOO1977"/>
<dbReference type="HOGENOM" id="CLU_040318_2_1_6"/>
<dbReference type="Proteomes" id="UP000006735">
    <property type="component" value="Chromosome"/>
</dbReference>
<dbReference type="GO" id="GO:0022627">
    <property type="term" value="C:cytosolic small ribosomal subunit"/>
    <property type="evidence" value="ECO:0007669"/>
    <property type="project" value="TreeGrafter"/>
</dbReference>
<dbReference type="GO" id="GO:0003735">
    <property type="term" value="F:structural constituent of ribosome"/>
    <property type="evidence" value="ECO:0007669"/>
    <property type="project" value="InterPro"/>
</dbReference>
<dbReference type="GO" id="GO:0006412">
    <property type="term" value="P:translation"/>
    <property type="evidence" value="ECO:0007669"/>
    <property type="project" value="UniProtKB-UniRule"/>
</dbReference>
<dbReference type="CDD" id="cd01425">
    <property type="entry name" value="RPS2"/>
    <property type="match status" value="1"/>
</dbReference>
<dbReference type="FunFam" id="1.10.287.610:FF:000001">
    <property type="entry name" value="30S ribosomal protein S2"/>
    <property type="match status" value="1"/>
</dbReference>
<dbReference type="Gene3D" id="3.40.50.10490">
    <property type="entry name" value="Glucose-6-phosphate isomerase like protein, domain 1"/>
    <property type="match status" value="1"/>
</dbReference>
<dbReference type="Gene3D" id="1.10.287.610">
    <property type="entry name" value="Helix hairpin bin"/>
    <property type="match status" value="1"/>
</dbReference>
<dbReference type="HAMAP" id="MF_00291_B">
    <property type="entry name" value="Ribosomal_uS2_B"/>
    <property type="match status" value="1"/>
</dbReference>
<dbReference type="InterPro" id="IPR001865">
    <property type="entry name" value="Ribosomal_uS2"/>
</dbReference>
<dbReference type="InterPro" id="IPR005706">
    <property type="entry name" value="Ribosomal_uS2_bac/mit/plastid"/>
</dbReference>
<dbReference type="InterPro" id="IPR018130">
    <property type="entry name" value="Ribosomal_uS2_CS"/>
</dbReference>
<dbReference type="InterPro" id="IPR023591">
    <property type="entry name" value="Ribosomal_uS2_flav_dom_sf"/>
</dbReference>
<dbReference type="NCBIfam" id="TIGR01011">
    <property type="entry name" value="rpsB_bact"/>
    <property type="match status" value="1"/>
</dbReference>
<dbReference type="PANTHER" id="PTHR12534">
    <property type="entry name" value="30S RIBOSOMAL PROTEIN S2 PROKARYOTIC AND ORGANELLAR"/>
    <property type="match status" value="1"/>
</dbReference>
<dbReference type="PANTHER" id="PTHR12534:SF0">
    <property type="entry name" value="SMALL RIBOSOMAL SUBUNIT PROTEIN US2M"/>
    <property type="match status" value="1"/>
</dbReference>
<dbReference type="Pfam" id="PF00318">
    <property type="entry name" value="Ribosomal_S2"/>
    <property type="match status" value="1"/>
</dbReference>
<dbReference type="PRINTS" id="PR00395">
    <property type="entry name" value="RIBOSOMALS2"/>
</dbReference>
<dbReference type="SUPFAM" id="SSF52313">
    <property type="entry name" value="Ribosomal protein S2"/>
    <property type="match status" value="1"/>
</dbReference>
<dbReference type="PROSITE" id="PS00962">
    <property type="entry name" value="RIBOSOMAL_S2_1"/>
    <property type="match status" value="1"/>
</dbReference>
<dbReference type="PROSITE" id="PS00963">
    <property type="entry name" value="RIBOSOMAL_S2_2"/>
    <property type="match status" value="1"/>
</dbReference>
<feature type="chain" id="PRO_0000352051" description="Small ribosomal subunit protein uS2">
    <location>
        <begin position="1"/>
        <end position="267"/>
    </location>
</feature>
<feature type="region of interest" description="Disordered" evidence="2">
    <location>
        <begin position="226"/>
        <end position="267"/>
    </location>
</feature>
<feature type="compositionally biased region" description="Basic and acidic residues" evidence="2">
    <location>
        <begin position="245"/>
        <end position="267"/>
    </location>
</feature>